<feature type="chain" id="PRO_0000269746" description="Probable histone acetyltransferase HAC-like 2">
    <location>
        <begin position="1"/>
        <end position="1439"/>
    </location>
</feature>
<feature type="domain" description="CBP/p300-type HAT" evidence="6">
    <location>
        <begin position="948"/>
        <end position="1383"/>
    </location>
</feature>
<feature type="zinc finger region" description="TAZ-type" evidence="4">
    <location>
        <begin position="607"/>
        <end position="687"/>
    </location>
</feature>
<feature type="zinc finger region" description="PHD-type; degenerate">
    <location>
        <begin position="827"/>
        <end position="933"/>
    </location>
</feature>
<feature type="zinc finger region" description="ZZ-type" evidence="5">
    <location>
        <begin position="1265"/>
        <end position="1328"/>
    </location>
</feature>
<feature type="region of interest" description="Disordered" evidence="7">
    <location>
        <begin position="1"/>
        <end position="43"/>
    </location>
</feature>
<feature type="region of interest" description="Disordered" evidence="7">
    <location>
        <begin position="313"/>
        <end position="335"/>
    </location>
</feature>
<feature type="coiled-coil region" evidence="3">
    <location>
        <begin position="964"/>
        <end position="989"/>
    </location>
</feature>
<feature type="compositionally biased region" description="Polar residues" evidence="7">
    <location>
        <begin position="325"/>
        <end position="335"/>
    </location>
</feature>
<feature type="binding site" evidence="1">
    <location>
        <begin position="1071"/>
        <end position="1073"/>
    </location>
    <ligand>
        <name>acetyl-CoA</name>
        <dbReference type="ChEBI" id="CHEBI:57288"/>
    </ligand>
</feature>
<feature type="binding site" evidence="1">
    <location>
        <begin position="1090"/>
        <end position="1091"/>
    </location>
    <ligand>
        <name>acetyl-CoA</name>
        <dbReference type="ChEBI" id="CHEBI:57288"/>
    </ligand>
</feature>
<feature type="binding site" evidence="1">
    <location>
        <position position="1146"/>
    </location>
    <ligand>
        <name>acetyl-CoA</name>
        <dbReference type="ChEBI" id="CHEBI:57288"/>
    </ligand>
</feature>
<feature type="binding site" evidence="5">
    <location>
        <position position="1270"/>
    </location>
    <ligand>
        <name>Zn(2+)</name>
        <dbReference type="ChEBI" id="CHEBI:29105"/>
        <label>1</label>
    </ligand>
</feature>
<feature type="binding site" evidence="5">
    <location>
        <position position="1273"/>
    </location>
    <ligand>
        <name>Zn(2+)</name>
        <dbReference type="ChEBI" id="CHEBI:29105"/>
        <label>1</label>
    </ligand>
</feature>
<feature type="binding site" evidence="5">
    <location>
        <position position="1285"/>
    </location>
    <ligand>
        <name>Zn(2+)</name>
        <dbReference type="ChEBI" id="CHEBI:29105"/>
        <label>2</label>
    </ligand>
</feature>
<feature type="binding site" evidence="5">
    <location>
        <position position="1288"/>
    </location>
    <ligand>
        <name>Zn(2+)</name>
        <dbReference type="ChEBI" id="CHEBI:29105"/>
        <label>2</label>
    </ligand>
</feature>
<feature type="binding site" evidence="5">
    <location>
        <position position="1294"/>
    </location>
    <ligand>
        <name>Zn(2+)</name>
        <dbReference type="ChEBI" id="CHEBI:29105"/>
        <label>1</label>
    </ligand>
</feature>
<feature type="binding site" evidence="5">
    <location>
        <position position="1297"/>
    </location>
    <ligand>
        <name>Zn(2+)</name>
        <dbReference type="ChEBI" id="CHEBI:29105"/>
        <label>1</label>
    </ligand>
</feature>
<feature type="binding site" evidence="5">
    <location>
        <position position="1310"/>
    </location>
    <ligand>
        <name>Zn(2+)</name>
        <dbReference type="ChEBI" id="CHEBI:29105"/>
        <label>2</label>
    </ligand>
</feature>
<feature type="binding site" evidence="5">
    <location>
        <position position="1318"/>
    </location>
    <ligand>
        <name>Zn(2+)</name>
        <dbReference type="ChEBI" id="CHEBI:29105"/>
        <label>2</label>
    </ligand>
</feature>
<dbReference type="EC" id="2.3.1.48" evidence="2"/>
<dbReference type="EMBL" id="AP003761">
    <property type="protein sequence ID" value="BAD53797.1"/>
    <property type="status" value="ALT_SEQ"/>
    <property type="molecule type" value="Genomic_DNA"/>
</dbReference>
<dbReference type="EMBL" id="AP008212">
    <property type="protein sequence ID" value="BAF20426.2"/>
    <property type="status" value="ALT_SEQ"/>
    <property type="molecule type" value="Genomic_DNA"/>
</dbReference>
<dbReference type="EMBL" id="AP014962">
    <property type="protein sequence ID" value="BAS99388.1"/>
    <property type="molecule type" value="Genomic_DNA"/>
</dbReference>
<dbReference type="SMR" id="Q5Z8V7"/>
<dbReference type="STRING" id="39947.Q5Z8V7"/>
<dbReference type="PaxDb" id="39947-Q5Z8V7"/>
<dbReference type="EnsemblPlants" id="Os06t0704800-00">
    <property type="protein sequence ID" value="Os06t0704800-00"/>
    <property type="gene ID" value="Os06g0704800"/>
</dbReference>
<dbReference type="Gramene" id="Os06t0704800-00">
    <property type="protein sequence ID" value="Os06t0704800-00"/>
    <property type="gene ID" value="Os06g0704800"/>
</dbReference>
<dbReference type="KEGG" id="dosa:Os06g0704800"/>
<dbReference type="eggNOG" id="KOG1778">
    <property type="taxonomic scope" value="Eukaryota"/>
</dbReference>
<dbReference type="HOGENOM" id="CLU_002956_2_0_1"/>
<dbReference type="InParanoid" id="Q5Z8V7"/>
<dbReference type="OMA" id="TAQMNPG"/>
<dbReference type="Proteomes" id="UP000000763">
    <property type="component" value="Chromosome 6"/>
</dbReference>
<dbReference type="Proteomes" id="UP000059680">
    <property type="component" value="Chromosome 6"/>
</dbReference>
<dbReference type="GO" id="GO:0000123">
    <property type="term" value="C:histone acetyltransferase complex"/>
    <property type="evidence" value="ECO:0000318"/>
    <property type="project" value="GO_Central"/>
</dbReference>
<dbReference type="GO" id="GO:0005634">
    <property type="term" value="C:nucleus"/>
    <property type="evidence" value="ECO:0007669"/>
    <property type="project" value="UniProtKB-SubCell"/>
</dbReference>
<dbReference type="GO" id="GO:0005667">
    <property type="term" value="C:transcription regulator complex"/>
    <property type="evidence" value="ECO:0000318"/>
    <property type="project" value="GO_Central"/>
</dbReference>
<dbReference type="GO" id="GO:0031490">
    <property type="term" value="F:chromatin DNA binding"/>
    <property type="evidence" value="ECO:0000318"/>
    <property type="project" value="GO_Central"/>
</dbReference>
<dbReference type="GO" id="GO:0004402">
    <property type="term" value="F:histone acetyltransferase activity"/>
    <property type="evidence" value="ECO:0000318"/>
    <property type="project" value="GO_Central"/>
</dbReference>
<dbReference type="GO" id="GO:0003713">
    <property type="term" value="F:transcription coactivator activity"/>
    <property type="evidence" value="ECO:0000318"/>
    <property type="project" value="GO_Central"/>
</dbReference>
<dbReference type="GO" id="GO:0008270">
    <property type="term" value="F:zinc ion binding"/>
    <property type="evidence" value="ECO:0007669"/>
    <property type="project" value="UniProtKB-KW"/>
</dbReference>
<dbReference type="GO" id="GO:0045944">
    <property type="term" value="P:positive regulation of transcription by RNA polymerase II"/>
    <property type="evidence" value="ECO:0000318"/>
    <property type="project" value="GO_Central"/>
</dbReference>
<dbReference type="FunFam" id="3.30.60.90:FF:000022">
    <property type="entry name" value="Histone acetyltransferase of the CBP family 12"/>
    <property type="match status" value="1"/>
</dbReference>
<dbReference type="Gene3D" id="3.30.60.90">
    <property type="match status" value="1"/>
</dbReference>
<dbReference type="Gene3D" id="1.20.1020.10">
    <property type="entry name" value="TAZ domain"/>
    <property type="match status" value="1"/>
</dbReference>
<dbReference type="Gene3D" id="3.30.40.10">
    <property type="entry name" value="Zinc/RING finger domain, C3HC4 (zinc finger)"/>
    <property type="match status" value="1"/>
</dbReference>
<dbReference type="InterPro" id="IPR031162">
    <property type="entry name" value="CBP_P300_HAT"/>
</dbReference>
<dbReference type="InterPro" id="IPR013178">
    <property type="entry name" value="Histone_AcTrfase_Rtt109/CBP"/>
</dbReference>
<dbReference type="InterPro" id="IPR035898">
    <property type="entry name" value="TAZ_dom_sf"/>
</dbReference>
<dbReference type="InterPro" id="IPR011011">
    <property type="entry name" value="Znf_FYVE_PHD"/>
</dbReference>
<dbReference type="InterPro" id="IPR013083">
    <property type="entry name" value="Znf_RING/FYVE/PHD"/>
</dbReference>
<dbReference type="InterPro" id="IPR000197">
    <property type="entry name" value="Znf_TAZ"/>
</dbReference>
<dbReference type="InterPro" id="IPR000433">
    <property type="entry name" value="Znf_ZZ"/>
</dbReference>
<dbReference type="InterPro" id="IPR043145">
    <property type="entry name" value="Znf_ZZ_sf"/>
</dbReference>
<dbReference type="PANTHER" id="PTHR13808">
    <property type="entry name" value="CBP/P300-RELATED"/>
    <property type="match status" value="1"/>
</dbReference>
<dbReference type="PANTHER" id="PTHR13808:SF1">
    <property type="entry name" value="HISTONE ACETYLTRANSFERASE"/>
    <property type="match status" value="1"/>
</dbReference>
<dbReference type="Pfam" id="PF08214">
    <property type="entry name" value="HAT_KAT11"/>
    <property type="match status" value="1"/>
</dbReference>
<dbReference type="Pfam" id="PF02135">
    <property type="entry name" value="zf-TAZ"/>
    <property type="match status" value="1"/>
</dbReference>
<dbReference type="SMART" id="SM01250">
    <property type="entry name" value="KAT11"/>
    <property type="match status" value="1"/>
</dbReference>
<dbReference type="SMART" id="SM00551">
    <property type="entry name" value="ZnF_TAZ"/>
    <property type="match status" value="1"/>
</dbReference>
<dbReference type="SUPFAM" id="SSF57903">
    <property type="entry name" value="FYVE/PHD zinc finger"/>
    <property type="match status" value="1"/>
</dbReference>
<dbReference type="SUPFAM" id="SSF57850">
    <property type="entry name" value="RING/U-box"/>
    <property type="match status" value="1"/>
</dbReference>
<dbReference type="SUPFAM" id="SSF57933">
    <property type="entry name" value="TAZ domain"/>
    <property type="match status" value="1"/>
</dbReference>
<dbReference type="PROSITE" id="PS51727">
    <property type="entry name" value="CBP_P300_HAT"/>
    <property type="match status" value="1"/>
</dbReference>
<dbReference type="PROSITE" id="PS50134">
    <property type="entry name" value="ZF_TAZ"/>
    <property type="match status" value="1"/>
</dbReference>
<dbReference type="PROSITE" id="PS01357">
    <property type="entry name" value="ZF_ZZ_1"/>
    <property type="match status" value="1"/>
</dbReference>
<dbReference type="PROSITE" id="PS50135">
    <property type="entry name" value="ZF_ZZ_2"/>
    <property type="match status" value="1"/>
</dbReference>
<proteinExistence type="inferred from homology"/>
<keyword id="KW-0010">Activator</keyword>
<keyword id="KW-0012">Acyltransferase</keyword>
<keyword id="KW-0156">Chromatin regulator</keyword>
<keyword id="KW-0175">Coiled coil</keyword>
<keyword id="KW-0479">Metal-binding</keyword>
<keyword id="KW-0539">Nucleus</keyword>
<keyword id="KW-1185">Reference proteome</keyword>
<keyword id="KW-0804">Transcription</keyword>
<keyword id="KW-0805">Transcription regulation</keyword>
<keyword id="KW-0808">Transferase</keyword>
<keyword id="KW-0862">Zinc</keyword>
<keyword id="KW-0863">Zinc-finger</keyword>
<reference key="1">
    <citation type="journal article" date="2005" name="Nature">
        <title>The map-based sequence of the rice genome.</title>
        <authorList>
            <consortium name="International rice genome sequencing project (IRGSP)"/>
        </authorList>
    </citation>
    <scope>NUCLEOTIDE SEQUENCE [LARGE SCALE GENOMIC DNA]</scope>
    <source>
        <strain>cv. Nipponbare</strain>
    </source>
</reference>
<reference key="2">
    <citation type="journal article" date="2008" name="Nucleic Acids Res.">
        <title>The rice annotation project database (RAP-DB): 2008 update.</title>
        <authorList>
            <consortium name="The rice annotation project (RAP)"/>
        </authorList>
    </citation>
    <scope>GENOME REANNOTATION</scope>
    <source>
        <strain>cv. Nipponbare</strain>
    </source>
</reference>
<reference key="3">
    <citation type="journal article" date="2013" name="Rice">
        <title>Improvement of the Oryza sativa Nipponbare reference genome using next generation sequence and optical map data.</title>
        <authorList>
            <person name="Kawahara Y."/>
            <person name="de la Bastide M."/>
            <person name="Hamilton J.P."/>
            <person name="Kanamori H."/>
            <person name="McCombie W.R."/>
            <person name="Ouyang S."/>
            <person name="Schwartz D.C."/>
            <person name="Tanaka T."/>
            <person name="Wu J."/>
            <person name="Zhou S."/>
            <person name="Childs K.L."/>
            <person name="Davidson R.M."/>
            <person name="Lin H."/>
            <person name="Quesada-Ocampo L."/>
            <person name="Vaillancourt B."/>
            <person name="Sakai H."/>
            <person name="Lee S.S."/>
            <person name="Kim J."/>
            <person name="Numa H."/>
            <person name="Itoh T."/>
            <person name="Buell C.R."/>
            <person name="Matsumoto T."/>
        </authorList>
    </citation>
    <scope>GENOME REANNOTATION</scope>
    <source>
        <strain>cv. Nipponbare</strain>
    </source>
</reference>
<name>HACL2_ORYSJ</name>
<comment type="function">
    <text evidence="2">Acetyltransferase enzyme. Acetylates histones, giving a specific tag for transcriptional activation.</text>
</comment>
<comment type="catalytic activity">
    <reaction evidence="2">
        <text>L-lysyl-[protein] + acetyl-CoA = N(6)-acetyl-L-lysyl-[protein] + CoA + H(+)</text>
        <dbReference type="Rhea" id="RHEA:45948"/>
        <dbReference type="Rhea" id="RHEA-COMP:9752"/>
        <dbReference type="Rhea" id="RHEA-COMP:10731"/>
        <dbReference type="ChEBI" id="CHEBI:15378"/>
        <dbReference type="ChEBI" id="CHEBI:29969"/>
        <dbReference type="ChEBI" id="CHEBI:57287"/>
        <dbReference type="ChEBI" id="CHEBI:57288"/>
        <dbReference type="ChEBI" id="CHEBI:61930"/>
        <dbReference type="EC" id="2.3.1.48"/>
    </reaction>
</comment>
<comment type="subcellular location">
    <subcellularLocation>
        <location evidence="8">Nucleus</location>
    </subcellularLocation>
</comment>
<comment type="sequence caution" evidence="8">
    <conflict type="erroneous gene model prediction">
        <sequence resource="EMBL-CDS" id="BAD53797"/>
    </conflict>
</comment>
<comment type="sequence caution" evidence="8">
    <conflict type="erroneous gene model prediction">
        <sequence resource="EMBL-CDS" id="BAF20426"/>
    </conflict>
</comment>
<organism>
    <name type="scientific">Oryza sativa subsp. japonica</name>
    <name type="common">Rice</name>
    <dbReference type="NCBI Taxonomy" id="39947"/>
    <lineage>
        <taxon>Eukaryota</taxon>
        <taxon>Viridiplantae</taxon>
        <taxon>Streptophyta</taxon>
        <taxon>Embryophyta</taxon>
        <taxon>Tracheophyta</taxon>
        <taxon>Spermatophyta</taxon>
        <taxon>Magnoliopsida</taxon>
        <taxon>Liliopsida</taxon>
        <taxon>Poales</taxon>
        <taxon>Poaceae</taxon>
        <taxon>BOP clade</taxon>
        <taxon>Oryzoideae</taxon>
        <taxon>Oryzeae</taxon>
        <taxon>Oryzinae</taxon>
        <taxon>Oryza</taxon>
        <taxon>Oryza sativa</taxon>
    </lineage>
</organism>
<gene>
    <name type="ordered locus">Os06g0704800</name>
    <name type="ordered locus">LOC_Os06g49130</name>
    <name type="ORF">P0018H04.4</name>
</gene>
<sequence length="1439" mass="163087">MKQGQGAHLSGQRIGHHPTAQMNPGDGDGNGRHQVASGHASADPELMNLRIRMTNRLIWELLSREPKLQTRPRKLVSDLAKRFEAVIYKKNPNKAAYYSILNGEIFPHLQHALSTHMAQHQQGQQMLQQLTSSSSYGTTIPIPDVVQNASGNTRALYEMDNTSGPMSNGHHHFSANFPLHSTTKGASLEMSAVSMQEGKITHMIPTPGSSNQQSLPGNFHYSTGTGYLNGKSNVMAQMQEQQAPFASKINCCPVQRDLGGYAGSGVHSDILNNSSPYGVSEAHMIDGMGLHRSNVQVINRTVVPETFINPSPYGISPNKPLQRHVNPSTRSTPTPADIAASTSFNGTGSSALSTTSYLDMTTVNSLPKSRMDSGLIMSQPTIQSFQTEYYIQTEGLDLQEKISLEQLHQQVNQLHLIQPHSQYAQNQCSLKLQQQNSLHHLVMSRGNVLTQCHLGSDHAEKLLDKRNQLHSELVSSQINEHVGLTNLQGHYEQTQYHDNYKKGQMSASSQNLGIPAPHDLLPPQQQFDDGSYRLSCFLKETYTKPLQPHCKSKPMKEVIMTSLLSGKIQDGFCQKKMARDREHHPIISGWHSAGCAATSFGSEEVMENTKQYHAQARWLLFLFHAKSCTSPPGSCKSSYCDRVRELVVHLTDCQIKDCSYRHCRESKMVSDHYKNCINEHCHVCCKAKEMLRRSSELAHKQNPAEPILITQHNMNQRSADRVHGDRMDIDQAVETFDDQPPAAKRPKLQLVSPDASENVPVCQKNPGFMLQEAHPRQLDQNKKMVPDQEVDVGLDIRHPQVTLVSCHGSDEKIGAAQNTVIPGALNKIHCHVQQETVVADKESVTVVDVKKKTGSVDVTISKTGKPKVKGVSLMELFTPEQIHEHINSLRQWIGQWVQCDKCECWQHQICALFNARRNDVEEAEYTCFKCYIEEFKRGLRMPLPESVVRGAKDLPRTLLSDHIEERLFKRLREERQERANKLKTSLDEVPGADGLVVRVVSSVDKKLEVKPHFFKILQEDNYPAEFPYKSKAILLFQKIEGVEVCLFGMYVQEYGAECKFPNQRRVYLSYLDSVKYFRPDIETVSGQALRTYVYHEILIGYLEYYKQRGFTSCYIWACPPVKGEDYILYCHPEIQKTPKSDKLRQWYLSMLQKAIKENIVVELTNLYDQFFVTAKECKIKVSAARLPYFDGDYWPGAAEDIINQLQLEGDGKLLKKGRVNKIITKRALKAAGHTDLSGNASKEAMLMQKLGEIICPIKDDLIMVHLQYSCSHCCTFMVSGRRWVCNECKSFYICDRCYNAEQRLEEKERHPSNSKCLHILHPVEIVGVSEDTKDRDIILENEIFDTRQAFLSFCQGYHYQYDTLRRAKHSTMMMLYHLHNPTGPAFVATCNVCNCDIENGQGWDFKSFERKQNQLSESRRMASVNERVRQRVAEVTRHE</sequence>
<protein>
    <recommendedName>
        <fullName>Probable histone acetyltransferase HAC-like 2</fullName>
        <ecNumber evidence="2">2.3.1.48</ecNumber>
    </recommendedName>
</protein>
<accession>Q5Z8V7</accession>
<accession>A0A0P0X0L7</accession>
<accession>Q0D9P7</accession>
<evidence type="ECO:0000250" key="1">
    <source>
        <dbReference type="UniProtKB" id="Q09472"/>
    </source>
</evidence>
<evidence type="ECO:0000250" key="2">
    <source>
        <dbReference type="UniProtKB" id="Q9C5X9"/>
    </source>
</evidence>
<evidence type="ECO:0000255" key="3"/>
<evidence type="ECO:0000255" key="4">
    <source>
        <dbReference type="PROSITE-ProRule" id="PRU00203"/>
    </source>
</evidence>
<evidence type="ECO:0000255" key="5">
    <source>
        <dbReference type="PROSITE-ProRule" id="PRU00228"/>
    </source>
</evidence>
<evidence type="ECO:0000255" key="6">
    <source>
        <dbReference type="PROSITE-ProRule" id="PRU01065"/>
    </source>
</evidence>
<evidence type="ECO:0000256" key="7">
    <source>
        <dbReference type="SAM" id="MobiDB-lite"/>
    </source>
</evidence>
<evidence type="ECO:0000305" key="8"/>